<feature type="chain" id="PRO_0000145270" description="DNA gyrase subunit A">
    <location>
        <begin position="1"/>
        <end position="804"/>
    </location>
</feature>
<feature type="domain" description="Topo IIA-type catalytic" evidence="2">
    <location>
        <begin position="31"/>
        <end position="495"/>
    </location>
</feature>
<feature type="short sequence motif" description="GyrA-box" evidence="1">
    <location>
        <begin position="522"/>
        <end position="528"/>
    </location>
</feature>
<feature type="active site" description="O-(5'-phospho-DNA)-tyrosine intermediate" evidence="1">
    <location>
        <position position="119"/>
    </location>
</feature>
<feature type="sequence conflict" description="In Ref. 1; AAB87144." evidence="3" ref="1">
    <original>Q</original>
    <variation>H</variation>
    <location>
        <position position="91"/>
    </location>
</feature>
<feature type="sequence conflict" description="In Ref. 1; AAB87144." evidence="3" ref="1">
    <original>P</original>
    <variation>T</variation>
    <location>
        <position position="153"/>
    </location>
</feature>
<reference key="1">
    <citation type="journal article" date="1997" name="Proc. Natl. Acad. Sci. U.S.A.">
        <title>Both DNA gyrase and reverse gyrase are present in the hyperthermophilic bacterium Thermotoga maritima.</title>
        <authorList>
            <person name="Guipaud O."/>
            <person name="Marguet E."/>
            <person name="Noll K.M."/>
            <person name="Bouthier de la Tour C."/>
            <person name="Forterre P."/>
        </authorList>
    </citation>
    <scope>NUCLEOTIDE SEQUENCE [GENOMIC DNA]</scope>
    <source>
        <strain>ATCC 43589 / DSM 3109 / JCM 10099 / NBRC 100826 / MSB8</strain>
    </source>
</reference>
<reference key="2">
    <citation type="journal article" date="1999" name="Nature">
        <title>Evidence for lateral gene transfer between Archaea and Bacteria from genome sequence of Thermotoga maritima.</title>
        <authorList>
            <person name="Nelson K.E."/>
            <person name="Clayton R.A."/>
            <person name="Gill S.R."/>
            <person name="Gwinn M.L."/>
            <person name="Dodson R.J."/>
            <person name="Haft D.H."/>
            <person name="Hickey E.K."/>
            <person name="Peterson J.D."/>
            <person name="Nelson W.C."/>
            <person name="Ketchum K.A."/>
            <person name="McDonald L.A."/>
            <person name="Utterback T.R."/>
            <person name="Malek J.A."/>
            <person name="Linher K.D."/>
            <person name="Garrett M.M."/>
            <person name="Stewart A.M."/>
            <person name="Cotton M.D."/>
            <person name="Pratt M.S."/>
            <person name="Phillips C.A."/>
            <person name="Richardson D.L."/>
            <person name="Heidelberg J.F."/>
            <person name="Sutton G.G."/>
            <person name="Fleischmann R.D."/>
            <person name="Eisen J.A."/>
            <person name="White O."/>
            <person name="Salzberg S.L."/>
            <person name="Smith H.O."/>
            <person name="Venter J.C."/>
            <person name="Fraser C.M."/>
        </authorList>
    </citation>
    <scope>NUCLEOTIDE SEQUENCE [LARGE SCALE GENOMIC DNA]</scope>
    <source>
        <strain>ATCC 43589 / DSM 3109 / JCM 10099 / NBRC 100826 / MSB8</strain>
    </source>
</reference>
<accession>O33926</accession>
<dbReference type="EC" id="5.6.2.2" evidence="1"/>
<dbReference type="EMBL" id="U76417">
    <property type="protein sequence ID" value="AAB87144.1"/>
    <property type="molecule type" value="Genomic_DNA"/>
</dbReference>
<dbReference type="EMBL" id="AE000512">
    <property type="protein sequence ID" value="AAD36161.1"/>
    <property type="molecule type" value="Genomic_DNA"/>
</dbReference>
<dbReference type="PIR" id="D72297">
    <property type="entry name" value="D72297"/>
</dbReference>
<dbReference type="RefSeq" id="NP_228890.1">
    <property type="nucleotide sequence ID" value="NC_000853.1"/>
</dbReference>
<dbReference type="RefSeq" id="WP_004080399.1">
    <property type="nucleotide sequence ID" value="NZ_CP011107.1"/>
</dbReference>
<dbReference type="SMR" id="O33926"/>
<dbReference type="FunCoup" id="O33926">
    <property type="interactions" value="395"/>
</dbReference>
<dbReference type="STRING" id="243274.TM_1084"/>
<dbReference type="PaxDb" id="243274-THEMA_08935"/>
<dbReference type="EnsemblBacteria" id="AAD36161">
    <property type="protein sequence ID" value="AAD36161"/>
    <property type="gene ID" value="TM_1084"/>
</dbReference>
<dbReference type="KEGG" id="tma:TM1084"/>
<dbReference type="KEGG" id="tmi:THEMA_08935"/>
<dbReference type="KEGG" id="tmm:Tmari_1088"/>
<dbReference type="KEGG" id="tmw:THMA_1106"/>
<dbReference type="eggNOG" id="COG0188">
    <property type="taxonomic scope" value="Bacteria"/>
</dbReference>
<dbReference type="InParanoid" id="O33926"/>
<dbReference type="OrthoDB" id="9806486at2"/>
<dbReference type="BRENDA" id="5.99.1.3">
    <property type="organism ID" value="6331"/>
</dbReference>
<dbReference type="Proteomes" id="UP000008183">
    <property type="component" value="Chromosome"/>
</dbReference>
<dbReference type="GO" id="GO:0005694">
    <property type="term" value="C:chromosome"/>
    <property type="evidence" value="ECO:0007669"/>
    <property type="project" value="InterPro"/>
</dbReference>
<dbReference type="GO" id="GO:0005737">
    <property type="term" value="C:cytoplasm"/>
    <property type="evidence" value="ECO:0000318"/>
    <property type="project" value="GO_Central"/>
</dbReference>
<dbReference type="GO" id="GO:0009330">
    <property type="term" value="C:DNA topoisomerase type II (double strand cut, ATP-hydrolyzing) complex"/>
    <property type="evidence" value="ECO:0000318"/>
    <property type="project" value="GO_Central"/>
</dbReference>
<dbReference type="GO" id="GO:0005524">
    <property type="term" value="F:ATP binding"/>
    <property type="evidence" value="ECO:0000318"/>
    <property type="project" value="GO_Central"/>
</dbReference>
<dbReference type="GO" id="GO:0003677">
    <property type="term" value="F:DNA binding"/>
    <property type="evidence" value="ECO:0000318"/>
    <property type="project" value="GO_Central"/>
</dbReference>
<dbReference type="GO" id="GO:0034335">
    <property type="term" value="F:DNA negative supercoiling activity"/>
    <property type="evidence" value="ECO:0007669"/>
    <property type="project" value="UniProtKB-ARBA"/>
</dbReference>
<dbReference type="GO" id="GO:0006265">
    <property type="term" value="P:DNA topological change"/>
    <property type="evidence" value="ECO:0000318"/>
    <property type="project" value="GO_Central"/>
</dbReference>
<dbReference type="GO" id="GO:0006261">
    <property type="term" value="P:DNA-templated DNA replication"/>
    <property type="evidence" value="ECO:0007669"/>
    <property type="project" value="UniProtKB-UniRule"/>
</dbReference>
<dbReference type="CDD" id="cd00187">
    <property type="entry name" value="TOP4c"/>
    <property type="match status" value="1"/>
</dbReference>
<dbReference type="FunFam" id="1.10.268.10:FF:000001">
    <property type="entry name" value="DNA gyrase subunit A"/>
    <property type="match status" value="1"/>
</dbReference>
<dbReference type="FunFam" id="3.30.1360.40:FF:000002">
    <property type="entry name" value="DNA gyrase subunit A"/>
    <property type="match status" value="1"/>
</dbReference>
<dbReference type="FunFam" id="3.90.199.10:FF:000001">
    <property type="entry name" value="DNA gyrase subunit A"/>
    <property type="match status" value="1"/>
</dbReference>
<dbReference type="FunFam" id="2.120.10.90:FF:000005">
    <property type="entry name" value="DNA topoisomerase 4 subunit A"/>
    <property type="match status" value="1"/>
</dbReference>
<dbReference type="Gene3D" id="3.30.1360.40">
    <property type="match status" value="1"/>
</dbReference>
<dbReference type="Gene3D" id="2.120.10.90">
    <property type="entry name" value="DNA gyrase/topoisomerase IV, subunit A, C-terminal"/>
    <property type="match status" value="1"/>
</dbReference>
<dbReference type="Gene3D" id="3.90.199.10">
    <property type="entry name" value="Topoisomerase II, domain 5"/>
    <property type="match status" value="1"/>
</dbReference>
<dbReference type="Gene3D" id="1.10.268.10">
    <property type="entry name" value="Topoisomerase, domain 3"/>
    <property type="match status" value="1"/>
</dbReference>
<dbReference type="HAMAP" id="MF_01897">
    <property type="entry name" value="GyrA"/>
    <property type="match status" value="1"/>
</dbReference>
<dbReference type="InterPro" id="IPR005743">
    <property type="entry name" value="GyrA"/>
</dbReference>
<dbReference type="InterPro" id="IPR006691">
    <property type="entry name" value="GyrA/parC_rep"/>
</dbReference>
<dbReference type="InterPro" id="IPR035516">
    <property type="entry name" value="Gyrase/topoIV_suA_C"/>
</dbReference>
<dbReference type="InterPro" id="IPR013760">
    <property type="entry name" value="Topo_IIA-like_dom_sf"/>
</dbReference>
<dbReference type="InterPro" id="IPR013758">
    <property type="entry name" value="Topo_IIA_A/C_ab"/>
</dbReference>
<dbReference type="InterPro" id="IPR013757">
    <property type="entry name" value="Topo_IIA_A_a_sf"/>
</dbReference>
<dbReference type="InterPro" id="IPR002205">
    <property type="entry name" value="Topo_IIA_dom_A"/>
</dbReference>
<dbReference type="InterPro" id="IPR050220">
    <property type="entry name" value="Type_II_DNA_Topoisomerases"/>
</dbReference>
<dbReference type="NCBIfam" id="TIGR01063">
    <property type="entry name" value="gyrA"/>
    <property type="match status" value="1"/>
</dbReference>
<dbReference type="NCBIfam" id="NF004043">
    <property type="entry name" value="PRK05560.1"/>
    <property type="match status" value="1"/>
</dbReference>
<dbReference type="NCBIfam" id="NF004044">
    <property type="entry name" value="PRK05561.1"/>
    <property type="match status" value="1"/>
</dbReference>
<dbReference type="PANTHER" id="PTHR43493:SF5">
    <property type="entry name" value="DNA GYRASE SUBUNIT A, CHLOROPLASTIC_MITOCHONDRIAL"/>
    <property type="match status" value="1"/>
</dbReference>
<dbReference type="PANTHER" id="PTHR43493">
    <property type="entry name" value="DNA GYRASE/TOPOISOMERASE SUBUNIT A"/>
    <property type="match status" value="1"/>
</dbReference>
<dbReference type="Pfam" id="PF03989">
    <property type="entry name" value="DNA_gyraseA_C"/>
    <property type="match status" value="6"/>
</dbReference>
<dbReference type="Pfam" id="PF00521">
    <property type="entry name" value="DNA_topoisoIV"/>
    <property type="match status" value="1"/>
</dbReference>
<dbReference type="SMART" id="SM00434">
    <property type="entry name" value="TOP4c"/>
    <property type="match status" value="1"/>
</dbReference>
<dbReference type="SUPFAM" id="SSF101904">
    <property type="entry name" value="GyrA/ParC C-terminal domain-like"/>
    <property type="match status" value="1"/>
</dbReference>
<dbReference type="SUPFAM" id="SSF56719">
    <property type="entry name" value="Type II DNA topoisomerase"/>
    <property type="match status" value="1"/>
</dbReference>
<dbReference type="PROSITE" id="PS52040">
    <property type="entry name" value="TOPO_IIA"/>
    <property type="match status" value="1"/>
</dbReference>
<name>GYRA_THEMA</name>
<protein>
    <recommendedName>
        <fullName evidence="1">DNA gyrase subunit A</fullName>
        <ecNumber evidence="1">5.6.2.2</ecNumber>
    </recommendedName>
</protein>
<proteinExistence type="inferred from homology"/>
<evidence type="ECO:0000255" key="1">
    <source>
        <dbReference type="HAMAP-Rule" id="MF_01897"/>
    </source>
</evidence>
<evidence type="ECO:0000255" key="2">
    <source>
        <dbReference type="PROSITE-ProRule" id="PRU01384"/>
    </source>
</evidence>
<evidence type="ECO:0000305" key="3"/>
<comment type="function">
    <text evidence="1">A type II topoisomerase that negatively supercoils closed circular double-stranded (ds) DNA in an ATP-dependent manner to modulate DNA topology and maintain chromosomes in an underwound state. Negative supercoiling favors strand separation, and DNA replication, transcription, recombination and repair, all of which involve strand separation. Also able to catalyze the interconversion of other topological isomers of dsDNA rings, including catenanes and knotted rings. Type II topoisomerases break and join 2 DNA strands simultaneously in an ATP-dependent manner.</text>
</comment>
<comment type="catalytic activity">
    <reaction evidence="1">
        <text>ATP-dependent breakage, passage and rejoining of double-stranded DNA.</text>
        <dbReference type="EC" id="5.6.2.2"/>
    </reaction>
</comment>
<comment type="subunit">
    <text evidence="1">Heterotetramer, composed of two GyrA and two GyrB chains. In the heterotetramer, GyrA contains the active site tyrosine that forms a transient covalent intermediate with DNA, while GyrB binds cofactors and catalyzes ATP hydrolysis.</text>
</comment>
<comment type="subcellular location">
    <subcellularLocation>
        <location evidence="1">Cytoplasm</location>
    </subcellularLocation>
</comment>
<comment type="miscellaneous">
    <text evidence="1">Few gyrases are as efficient as E.coli at forming negative supercoils. Not all organisms have 2 type II topoisomerases; in organisms with a single type II topoisomerase this enzyme also has to decatenate newly replicated chromosomes.</text>
</comment>
<comment type="similarity">
    <text evidence="1">Belongs to the type II topoisomerase GyrA/ParC subunit family.</text>
</comment>
<organism>
    <name type="scientific">Thermotoga maritima (strain ATCC 43589 / DSM 3109 / JCM 10099 / NBRC 100826 / MSB8)</name>
    <dbReference type="NCBI Taxonomy" id="243274"/>
    <lineage>
        <taxon>Bacteria</taxon>
        <taxon>Thermotogati</taxon>
        <taxon>Thermotogota</taxon>
        <taxon>Thermotogae</taxon>
        <taxon>Thermotogales</taxon>
        <taxon>Thermotogaceae</taxon>
        <taxon>Thermotoga</taxon>
    </lineage>
</organism>
<gene>
    <name evidence="1" type="primary">gyrA</name>
    <name type="synonym">top2A</name>
    <name type="ordered locus">TM_1084</name>
</gene>
<keyword id="KW-0067">ATP-binding</keyword>
<keyword id="KW-0963">Cytoplasm</keyword>
<keyword id="KW-0238">DNA-binding</keyword>
<keyword id="KW-0413">Isomerase</keyword>
<keyword id="KW-0547">Nucleotide-binding</keyword>
<keyword id="KW-1185">Reference proteome</keyword>
<keyword id="KW-0799">Topoisomerase</keyword>
<sequence>MPEILINKPVEDELVESYLLYSMSVIVGRAIPDVRDGLKPVQRRILYGMYELGLKHNSPTKKSARIVGEVMGKYHPHGDAPVYDALVRMAQPFTMRYPLIEGQGNFGSIDRDPPAAMRYTEARLTRLAEEMLEDIEKNTVNMIDNFDGTLKEPEVLPSKVPNLIINGASGIAVGMATNIPPHNLSETVDALIYLIDHPEATVEELMQFIKGPDFPTGAVVVNASELKKVYEEGRGRIIVRGKVHVEDGKRVKRIVITEIPYGVSKAGLIEQIAKIAKDDESLPIRNIRDESDKRGMRIVIEIPKDANEEVIINNLYKRTALQDYFNVQMLVIDKHKRPRLMNLKGLMEAFLEHRFEVIRRRARYEYEQYTRRAHVVEGLLKAARAIGVVVDIVRNSKDVESARQSLMETLEITEEQAKAILDMRLSRLTSLEIENLQNEYSDLVRKISEVKEILEKDEKVKEIMKKEFLYLKQQYGDPRRTEVTDQSIEYNEEELIVEEDVVITLSHKGYLKSTPLNSYRSQKRGGKGITVSKLSEDDEVEFVVVAKNTSSTLFITNLGRAYVLKNYQLETTGRNTRGRHITAFLNLEDTEKIVALASLNGEGRDLVIATKSGKIKRTALKEFENATSNRGVRAIKIEPGDEIVSARVVNSEKETLIVATKMGMAIRFPVSDVRRMGRNAAGVQAIKLQPGDEVVSVDVIPPGEEGEILTVTEKGFGKRTPVQLYRIQRRGGTGLRNISDVNKTGYVVAVRYVRGDEEIVVVTRNGMMIRFPVSEIGVIGRVTKGVKLIELGDDTISKVAVVKD</sequence>